<reference key="1">
    <citation type="journal article" date="2001" name="Neuron">
        <title>Glial cells mediate target layer selection of retinal axons in the developing visual system of Drosophila.</title>
        <authorList>
            <person name="Poeck B."/>
            <person name="Fischer S."/>
            <person name="Gunning D."/>
            <person name="Zipursky S.L."/>
            <person name="Salecker I."/>
        </authorList>
    </citation>
    <scope>NUCLEOTIDE SEQUENCE [MRNA]</scope>
    <scope>FUNCTION</scope>
    <scope>DISRUPTION PHENOTYPE</scope>
    <scope>TISSUE SPECIFICITY</scope>
</reference>
<reference key="2">
    <citation type="journal article" date="2000" name="Science">
        <title>The genome sequence of Drosophila melanogaster.</title>
        <authorList>
            <person name="Adams M.D."/>
            <person name="Celniker S.E."/>
            <person name="Holt R.A."/>
            <person name="Evans C.A."/>
            <person name="Gocayne J.D."/>
            <person name="Amanatides P.G."/>
            <person name="Scherer S.E."/>
            <person name="Li P.W."/>
            <person name="Hoskins R.A."/>
            <person name="Galle R.F."/>
            <person name="George R.A."/>
            <person name="Lewis S.E."/>
            <person name="Richards S."/>
            <person name="Ashburner M."/>
            <person name="Henderson S.N."/>
            <person name="Sutton G.G."/>
            <person name="Wortman J.R."/>
            <person name="Yandell M.D."/>
            <person name="Zhang Q."/>
            <person name="Chen L.X."/>
            <person name="Brandon R.C."/>
            <person name="Rogers Y.-H.C."/>
            <person name="Blazej R.G."/>
            <person name="Champe M."/>
            <person name="Pfeiffer B.D."/>
            <person name="Wan K.H."/>
            <person name="Doyle C."/>
            <person name="Baxter E.G."/>
            <person name="Helt G."/>
            <person name="Nelson C.R."/>
            <person name="Miklos G.L.G."/>
            <person name="Abril J.F."/>
            <person name="Agbayani A."/>
            <person name="An H.-J."/>
            <person name="Andrews-Pfannkoch C."/>
            <person name="Baldwin D."/>
            <person name="Ballew R.M."/>
            <person name="Basu A."/>
            <person name="Baxendale J."/>
            <person name="Bayraktaroglu L."/>
            <person name="Beasley E.M."/>
            <person name="Beeson K.Y."/>
            <person name="Benos P.V."/>
            <person name="Berman B.P."/>
            <person name="Bhandari D."/>
            <person name="Bolshakov S."/>
            <person name="Borkova D."/>
            <person name="Botchan M.R."/>
            <person name="Bouck J."/>
            <person name="Brokstein P."/>
            <person name="Brottier P."/>
            <person name="Burtis K.C."/>
            <person name="Busam D.A."/>
            <person name="Butler H."/>
            <person name="Cadieu E."/>
            <person name="Center A."/>
            <person name="Chandra I."/>
            <person name="Cherry J.M."/>
            <person name="Cawley S."/>
            <person name="Dahlke C."/>
            <person name="Davenport L.B."/>
            <person name="Davies P."/>
            <person name="de Pablos B."/>
            <person name="Delcher A."/>
            <person name="Deng Z."/>
            <person name="Mays A.D."/>
            <person name="Dew I."/>
            <person name="Dietz S.M."/>
            <person name="Dodson K."/>
            <person name="Doup L.E."/>
            <person name="Downes M."/>
            <person name="Dugan-Rocha S."/>
            <person name="Dunkov B.C."/>
            <person name="Dunn P."/>
            <person name="Durbin K.J."/>
            <person name="Evangelista C.C."/>
            <person name="Ferraz C."/>
            <person name="Ferriera S."/>
            <person name="Fleischmann W."/>
            <person name="Fosler C."/>
            <person name="Gabrielian A.E."/>
            <person name="Garg N.S."/>
            <person name="Gelbart W.M."/>
            <person name="Glasser K."/>
            <person name="Glodek A."/>
            <person name="Gong F."/>
            <person name="Gorrell J.H."/>
            <person name="Gu Z."/>
            <person name="Guan P."/>
            <person name="Harris M."/>
            <person name="Harris N.L."/>
            <person name="Harvey D.A."/>
            <person name="Heiman T.J."/>
            <person name="Hernandez J.R."/>
            <person name="Houck J."/>
            <person name="Hostin D."/>
            <person name="Houston K.A."/>
            <person name="Howland T.J."/>
            <person name="Wei M.-H."/>
            <person name="Ibegwam C."/>
            <person name="Jalali M."/>
            <person name="Kalush F."/>
            <person name="Karpen G.H."/>
            <person name="Ke Z."/>
            <person name="Kennison J.A."/>
            <person name="Ketchum K.A."/>
            <person name="Kimmel B.E."/>
            <person name="Kodira C.D."/>
            <person name="Kraft C.L."/>
            <person name="Kravitz S."/>
            <person name="Kulp D."/>
            <person name="Lai Z."/>
            <person name="Lasko P."/>
            <person name="Lei Y."/>
            <person name="Levitsky A.A."/>
            <person name="Li J.H."/>
            <person name="Li Z."/>
            <person name="Liang Y."/>
            <person name="Lin X."/>
            <person name="Liu X."/>
            <person name="Mattei B."/>
            <person name="McIntosh T.C."/>
            <person name="McLeod M.P."/>
            <person name="McPherson D."/>
            <person name="Merkulov G."/>
            <person name="Milshina N.V."/>
            <person name="Mobarry C."/>
            <person name="Morris J."/>
            <person name="Moshrefi A."/>
            <person name="Mount S.M."/>
            <person name="Moy M."/>
            <person name="Murphy B."/>
            <person name="Murphy L."/>
            <person name="Muzny D.M."/>
            <person name="Nelson D.L."/>
            <person name="Nelson D.R."/>
            <person name="Nelson K.A."/>
            <person name="Nixon K."/>
            <person name="Nusskern D.R."/>
            <person name="Pacleb J.M."/>
            <person name="Palazzolo M."/>
            <person name="Pittman G.S."/>
            <person name="Pan S."/>
            <person name="Pollard J."/>
            <person name="Puri V."/>
            <person name="Reese M.G."/>
            <person name="Reinert K."/>
            <person name="Remington K."/>
            <person name="Saunders R.D.C."/>
            <person name="Scheeler F."/>
            <person name="Shen H."/>
            <person name="Shue B.C."/>
            <person name="Siden-Kiamos I."/>
            <person name="Simpson M."/>
            <person name="Skupski M.P."/>
            <person name="Smith T.J."/>
            <person name="Spier E."/>
            <person name="Spradling A.C."/>
            <person name="Stapleton M."/>
            <person name="Strong R."/>
            <person name="Sun E."/>
            <person name="Svirskas R."/>
            <person name="Tector C."/>
            <person name="Turner R."/>
            <person name="Venter E."/>
            <person name="Wang A.H."/>
            <person name="Wang X."/>
            <person name="Wang Z.-Y."/>
            <person name="Wassarman D.A."/>
            <person name="Weinstock G.M."/>
            <person name="Weissenbach J."/>
            <person name="Williams S.M."/>
            <person name="Woodage T."/>
            <person name="Worley K.C."/>
            <person name="Wu D."/>
            <person name="Yang S."/>
            <person name="Yao Q.A."/>
            <person name="Ye J."/>
            <person name="Yeh R.-F."/>
            <person name="Zaveri J.S."/>
            <person name="Zhan M."/>
            <person name="Zhang G."/>
            <person name="Zhao Q."/>
            <person name="Zheng L."/>
            <person name="Zheng X.H."/>
            <person name="Zhong F.N."/>
            <person name="Zhong W."/>
            <person name="Zhou X."/>
            <person name="Zhu S.C."/>
            <person name="Zhu X."/>
            <person name="Smith H.O."/>
            <person name="Gibbs R.A."/>
            <person name="Myers E.W."/>
            <person name="Rubin G.M."/>
            <person name="Venter J.C."/>
        </authorList>
    </citation>
    <scope>NUCLEOTIDE SEQUENCE [LARGE SCALE GENOMIC DNA]</scope>
    <source>
        <strain>Berkeley</strain>
    </source>
</reference>
<reference key="3">
    <citation type="journal article" date="2002" name="Genome Biol.">
        <title>Annotation of the Drosophila melanogaster euchromatic genome: a systematic review.</title>
        <authorList>
            <person name="Misra S."/>
            <person name="Crosby M.A."/>
            <person name="Mungall C.J."/>
            <person name="Matthews B.B."/>
            <person name="Campbell K.S."/>
            <person name="Hradecky P."/>
            <person name="Huang Y."/>
            <person name="Kaminker J.S."/>
            <person name="Millburn G.H."/>
            <person name="Prochnik S.E."/>
            <person name="Smith C.D."/>
            <person name="Tupy J.L."/>
            <person name="Whitfield E.J."/>
            <person name="Bayraktaroglu L."/>
            <person name="Berman B.P."/>
            <person name="Bettencourt B.R."/>
            <person name="Celniker S.E."/>
            <person name="de Grey A.D.N.J."/>
            <person name="Drysdale R.A."/>
            <person name="Harris N.L."/>
            <person name="Richter J."/>
            <person name="Russo S."/>
            <person name="Schroeder A.J."/>
            <person name="Shu S.Q."/>
            <person name="Stapleton M."/>
            <person name="Yamada C."/>
            <person name="Ashburner M."/>
            <person name="Gelbart W.M."/>
            <person name="Rubin G.M."/>
            <person name="Lewis S.E."/>
        </authorList>
    </citation>
    <scope>GENOME REANNOTATION</scope>
    <source>
        <strain>Berkeley</strain>
    </source>
</reference>
<reference key="4">
    <citation type="journal article" date="2002" name="Genome Biol.">
        <title>A Drosophila full-length cDNA resource.</title>
        <authorList>
            <person name="Stapleton M."/>
            <person name="Carlson J.W."/>
            <person name="Brokstein P."/>
            <person name="Yu C."/>
            <person name="Champe M."/>
            <person name="George R.A."/>
            <person name="Guarin H."/>
            <person name="Kronmiller B."/>
            <person name="Pacleb J.M."/>
            <person name="Park S."/>
            <person name="Wan K.H."/>
            <person name="Rubin G.M."/>
            <person name="Celniker S.E."/>
        </authorList>
    </citation>
    <scope>NUCLEOTIDE SEQUENCE [LARGE SCALE MRNA]</scope>
    <source>
        <strain>Berkeley</strain>
        <tissue>Embryo</tissue>
    </source>
</reference>
<reference key="5">
    <citation type="journal article" date="2008" name="EMBO J.">
        <title>SAGA-mediated H2B deubiquitination controls the development of neuronal connectivity in the Drosophila visual system.</title>
        <authorList>
            <person name="Weake V.M."/>
            <person name="Lee K.K."/>
            <person name="Guelman S."/>
            <person name="Lin C.-H."/>
            <person name="Seidel C."/>
            <person name="Abmayr S.M."/>
            <person name="Workman J.L."/>
        </authorList>
    </citation>
    <scope>FUNCTION</scope>
    <scope>DISRUPTION PHENOTYPE</scope>
    <scope>IDENTIFICATION IN THE SAGA COMPLEX</scope>
    <scope>INTERACTION WITH SGF11</scope>
</reference>
<reference key="6">
    <citation type="journal article" date="2008" name="Mol. Cell">
        <title>A TFTC/STAGA module mediates histone H2A and H2B deubiquitination, coactivates nuclear receptors, and counteracts heterochromatin silencing.</title>
        <authorList>
            <person name="Zhao Y."/>
            <person name="Lang G."/>
            <person name="Ito S."/>
            <person name="Bonnet J."/>
            <person name="Metzger E."/>
            <person name="Sawatsubashi S."/>
            <person name="Suzuki E."/>
            <person name="Le Guezennec X."/>
            <person name="Stunnenberg H.G."/>
            <person name="Krasnov A."/>
            <person name="Georgieva S.G."/>
            <person name="Schuele R."/>
            <person name="Takeyama K."/>
            <person name="Kato S."/>
            <person name="Tora L."/>
            <person name="Devys D."/>
        </authorList>
    </citation>
    <scope>FUNCTION</scope>
</reference>
<feature type="chain" id="PRO_0000367514" description="Ubiquitin carboxyl-terminal hydrolase nonstop">
    <location>
        <begin position="1"/>
        <end position="496"/>
    </location>
</feature>
<feature type="domain" description="USP" evidence="2">
    <location>
        <begin position="158"/>
        <end position="491"/>
    </location>
</feature>
<feature type="zinc finger region" description="UBP-type" evidence="1">
    <location>
        <begin position="4"/>
        <end position="120"/>
    </location>
</feature>
<feature type="active site" description="Nucleophile" evidence="2">
    <location>
        <position position="167"/>
    </location>
</feature>
<feature type="active site" description="Proton acceptor" evidence="2">
    <location>
        <position position="450"/>
    </location>
</feature>
<feature type="binding site" evidence="1">
    <location>
        <position position="6"/>
    </location>
    <ligand>
        <name>Zn(2+)</name>
        <dbReference type="ChEBI" id="CHEBI:29105"/>
        <label>1</label>
    </ligand>
</feature>
<feature type="binding site" evidence="1">
    <location>
        <position position="8"/>
    </location>
    <ligand>
        <name>Zn(2+)</name>
        <dbReference type="ChEBI" id="CHEBI:29105"/>
        <label>1</label>
    </ligand>
</feature>
<feature type="binding site" evidence="1">
    <location>
        <position position="46"/>
    </location>
    <ligand>
        <name>Zn(2+)</name>
        <dbReference type="ChEBI" id="CHEBI:29105"/>
        <label>2</label>
    </ligand>
</feature>
<feature type="binding site" evidence="1">
    <location>
        <position position="49"/>
    </location>
    <ligand>
        <name>Zn(2+)</name>
        <dbReference type="ChEBI" id="CHEBI:29105"/>
        <label>2</label>
    </ligand>
</feature>
<feature type="binding site" evidence="1">
    <location>
        <position position="59"/>
    </location>
    <ligand>
        <name>Zn(2+)</name>
        <dbReference type="ChEBI" id="CHEBI:29105"/>
        <label>3</label>
    </ligand>
</feature>
<feature type="binding site" evidence="1">
    <location>
        <position position="62"/>
    </location>
    <ligand>
        <name>Zn(2+)</name>
        <dbReference type="ChEBI" id="CHEBI:29105"/>
        <label>3</label>
    </ligand>
</feature>
<feature type="binding site" evidence="1">
    <location>
        <position position="67"/>
    </location>
    <ligand>
        <name>Zn(2+)</name>
        <dbReference type="ChEBI" id="CHEBI:29105"/>
        <label>2</label>
    </ligand>
</feature>
<feature type="binding site" evidence="1">
    <location>
        <position position="71"/>
    </location>
    <ligand>
        <name>Zn(2+)</name>
        <dbReference type="ChEBI" id="CHEBI:29105"/>
        <label>2</label>
    </ligand>
</feature>
<feature type="binding site" evidence="1">
    <location>
        <position position="75"/>
    </location>
    <ligand>
        <name>Zn(2+)</name>
        <dbReference type="ChEBI" id="CHEBI:29105"/>
        <label>3</label>
    </ligand>
</feature>
<feature type="binding site" evidence="1">
    <location>
        <position position="81"/>
    </location>
    <ligand>
        <name>Zn(2+)</name>
        <dbReference type="ChEBI" id="CHEBI:29105"/>
        <label>3</label>
    </ligand>
</feature>
<feature type="binding site" evidence="1">
    <location>
        <position position="94"/>
    </location>
    <ligand>
        <name>Zn(2+)</name>
        <dbReference type="ChEBI" id="CHEBI:29105"/>
        <label>1</label>
    </ligand>
</feature>
<feature type="binding site" evidence="1">
    <location>
        <position position="97"/>
    </location>
    <ligand>
        <name>Zn(2+)</name>
        <dbReference type="ChEBI" id="CHEBI:29105"/>
        <label>1</label>
    </ligand>
</feature>
<evidence type="ECO:0000255" key="1">
    <source>
        <dbReference type="PROSITE-ProRule" id="PRU00502"/>
    </source>
</evidence>
<evidence type="ECO:0000255" key="2">
    <source>
        <dbReference type="PROSITE-ProRule" id="PRU01035"/>
    </source>
</evidence>
<evidence type="ECO:0000269" key="3">
    <source>
    </source>
</evidence>
<evidence type="ECO:0000269" key="4">
    <source>
    </source>
</evidence>
<evidence type="ECO:0000269" key="5">
    <source>
    </source>
</evidence>
<evidence type="ECO:0000305" key="6"/>
<keyword id="KW-0010">Activator</keyword>
<keyword id="KW-0156">Chromatin regulator</keyword>
<keyword id="KW-0378">Hydrolase</keyword>
<keyword id="KW-0479">Metal-binding</keyword>
<keyword id="KW-0539">Nucleus</keyword>
<keyword id="KW-0645">Protease</keyword>
<keyword id="KW-1185">Reference proteome</keyword>
<keyword id="KW-0788">Thiol protease</keyword>
<keyword id="KW-0804">Transcription</keyword>
<keyword id="KW-0805">Transcription regulation</keyword>
<keyword id="KW-0833">Ubl conjugation pathway</keyword>
<keyword id="KW-0862">Zinc</keyword>
<keyword id="KW-0863">Zinc-finger</keyword>
<organism>
    <name type="scientific">Drosophila melanogaster</name>
    <name type="common">Fruit fly</name>
    <dbReference type="NCBI Taxonomy" id="7227"/>
    <lineage>
        <taxon>Eukaryota</taxon>
        <taxon>Metazoa</taxon>
        <taxon>Ecdysozoa</taxon>
        <taxon>Arthropoda</taxon>
        <taxon>Hexapoda</taxon>
        <taxon>Insecta</taxon>
        <taxon>Pterygota</taxon>
        <taxon>Neoptera</taxon>
        <taxon>Endopterygota</taxon>
        <taxon>Diptera</taxon>
        <taxon>Brachycera</taxon>
        <taxon>Muscomorpha</taxon>
        <taxon>Ephydroidea</taxon>
        <taxon>Drosophilidae</taxon>
        <taxon>Drosophila</taxon>
        <taxon>Sophophora</taxon>
    </lineage>
</organism>
<name>NOT_DROME</name>
<comment type="function">
    <text evidence="3 4 5">Histone deubiquitinating component of the transcription regulatory histone acetylation (HAT) complex SAGA. Catalyzes the deubiquitination of histone H2B, thereby acting as a coactivator in a large subset of genes. Required to counteract heterochromatin silencing. Controls the development of neuronal connectivity in visual system by being required for accurate axon targeting in the optic lobe. Required for expression of ecdysone-induced genes such as br/broad.</text>
</comment>
<comment type="catalytic activity">
    <reaction>
        <text>Thiol-dependent hydrolysis of ester, thioester, amide, peptide and isopeptide bonds formed by the C-terminal Gly of ubiquitin (a 76-residue protein attached to proteins as an intracellular targeting signal).</text>
        <dbReference type="EC" id="3.4.19.12"/>
    </reaction>
</comment>
<comment type="subunit">
    <text evidence="4">Component of the SAGA transcription coactivator-HAT complex, at least composed of Ada2b, not/nonstop, Pcaf/Gcn5, Sgf11 and Spt3.</text>
</comment>
<comment type="subcellular location">
    <subcellularLocation>
        <location evidence="6">Nucleus</location>
    </subcellularLocation>
</comment>
<comment type="tissue specificity">
    <text evidence="3">Expressed in the optic lobe and central brain. Highly expressed in the lamina precursor cells but not in differentiated lamina neurons. Also expressed in marginal, epithelial and medulla glial cells adjacent to the lamina plexus.</text>
</comment>
<comment type="disruption phenotype">
    <text evidence="3 4">Defects in the number and migration of glial cells located within the lamina plexus of the developing eye; the lack of glial cells causing mistargeting of the R1-R6 axons in the optic lobe. Lamina neuron development is normal.</text>
</comment>
<comment type="similarity">
    <text evidence="6">Belongs to the peptidase C19 family. UBP8 subfamily.</text>
</comment>
<comment type="sequence caution" evidence="6">
    <conflict type="erroneous gene model prediction">
        <sequence resource="EMBL-CDS" id="AAD53181"/>
    </conflict>
</comment>
<comment type="sequence caution" evidence="6">
    <conflict type="erroneous initiation">
        <sequence resource="EMBL-CDS" id="AAL13936"/>
    </conflict>
    <text>Extended N-terminus.</text>
</comment>
<gene>
    <name type="primary">not</name>
    <name type="ORF">CG4166</name>
</gene>
<dbReference type="EC" id="3.4.19.12"/>
<dbReference type="EMBL" id="AF179590">
    <property type="protein sequence ID" value="AAD53181.1"/>
    <property type="status" value="ALT_SEQ"/>
    <property type="molecule type" value="Genomic_DNA"/>
</dbReference>
<dbReference type="EMBL" id="AE014296">
    <property type="protein sequence ID" value="AAF49249.2"/>
    <property type="molecule type" value="Genomic_DNA"/>
</dbReference>
<dbReference type="EMBL" id="AE014296">
    <property type="protein sequence ID" value="AHN58131.1"/>
    <property type="molecule type" value="Genomic_DNA"/>
</dbReference>
<dbReference type="EMBL" id="AY058707">
    <property type="protein sequence ID" value="AAL13936.1"/>
    <property type="status" value="ALT_INIT"/>
    <property type="molecule type" value="mRNA"/>
</dbReference>
<dbReference type="RefSeq" id="NP_001287106.1">
    <property type="nucleotide sequence ID" value="NM_001300177.1"/>
</dbReference>
<dbReference type="RefSeq" id="NP_524140.2">
    <property type="nucleotide sequence ID" value="NM_079416.4"/>
</dbReference>
<dbReference type="SMR" id="Q9VVR1"/>
<dbReference type="BioGRID" id="65311">
    <property type="interactions" value="20"/>
</dbReference>
<dbReference type="ComplexPortal" id="CPX-2644">
    <property type="entry name" value="SAGA complex"/>
</dbReference>
<dbReference type="FunCoup" id="Q9VVR1">
    <property type="interactions" value="1071"/>
</dbReference>
<dbReference type="IntAct" id="Q9VVR1">
    <property type="interactions" value="4"/>
</dbReference>
<dbReference type="MINT" id="Q9VVR1"/>
<dbReference type="STRING" id="7227.FBpp0312097"/>
<dbReference type="MEROPS" id="C19.095"/>
<dbReference type="PaxDb" id="7227-FBpp0288698"/>
<dbReference type="DNASU" id="40030"/>
<dbReference type="EnsemblMetazoa" id="FBtr0290259">
    <property type="protein sequence ID" value="FBpp0288698"/>
    <property type="gene ID" value="FBgn0013717"/>
</dbReference>
<dbReference type="EnsemblMetazoa" id="FBtr0346438">
    <property type="protein sequence ID" value="FBpp0312097"/>
    <property type="gene ID" value="FBgn0013717"/>
</dbReference>
<dbReference type="GeneID" id="40030"/>
<dbReference type="KEGG" id="dme:Dmel_CG4166"/>
<dbReference type="UCSC" id="CG4166-RB">
    <property type="organism name" value="d. melanogaster"/>
</dbReference>
<dbReference type="AGR" id="FB:FBgn0013717"/>
<dbReference type="CTD" id="40030"/>
<dbReference type="FlyBase" id="FBgn0013717">
    <property type="gene designation" value="not"/>
</dbReference>
<dbReference type="VEuPathDB" id="VectorBase:FBgn0013717"/>
<dbReference type="eggNOG" id="KOG1867">
    <property type="taxonomic scope" value="Eukaryota"/>
</dbReference>
<dbReference type="GeneTree" id="ENSGT00940000156623"/>
<dbReference type="HOGENOM" id="CLU_008279_11_0_1"/>
<dbReference type="InParanoid" id="Q9VVR1"/>
<dbReference type="OMA" id="TEKHIHE"/>
<dbReference type="OrthoDB" id="47475at2759"/>
<dbReference type="PhylomeDB" id="Q9VVR1"/>
<dbReference type="Reactome" id="R-DME-5689880">
    <property type="pathway name" value="Ub-specific processing proteases"/>
</dbReference>
<dbReference type="BioGRID-ORCS" id="40030">
    <property type="hits" value="0 hits in 3 CRISPR screens"/>
</dbReference>
<dbReference type="ChiTaRS" id="Not1">
    <property type="organism name" value="fly"/>
</dbReference>
<dbReference type="GenomeRNAi" id="40030"/>
<dbReference type="PRO" id="PR:Q9VVR1"/>
<dbReference type="Proteomes" id="UP000000803">
    <property type="component" value="Chromosome 3L"/>
</dbReference>
<dbReference type="Bgee" id="FBgn0013717">
    <property type="expression patterns" value="Expressed in T neuron T5d (Drosophila) in embryonic/larval optic lobe (Drosophila) and 111 other cell types or tissues"/>
</dbReference>
<dbReference type="GO" id="GO:0071819">
    <property type="term" value="C:DUBm complex"/>
    <property type="evidence" value="ECO:0000314"/>
    <property type="project" value="FlyBase"/>
</dbReference>
<dbReference type="GO" id="GO:0005634">
    <property type="term" value="C:nucleus"/>
    <property type="evidence" value="ECO:0000314"/>
    <property type="project" value="FlyBase"/>
</dbReference>
<dbReference type="GO" id="GO:0000124">
    <property type="term" value="C:SAGA complex"/>
    <property type="evidence" value="ECO:0000314"/>
    <property type="project" value="FlyBase"/>
</dbReference>
<dbReference type="GO" id="GO:0004843">
    <property type="term" value="F:cysteine-type deubiquitinase activity"/>
    <property type="evidence" value="ECO:0000255"/>
    <property type="project" value="FlyBase"/>
</dbReference>
<dbReference type="GO" id="GO:0008270">
    <property type="term" value="F:zinc ion binding"/>
    <property type="evidence" value="ECO:0007669"/>
    <property type="project" value="UniProtKB-KW"/>
</dbReference>
<dbReference type="GO" id="GO:0007412">
    <property type="term" value="P:axon target recognition"/>
    <property type="evidence" value="ECO:0000315"/>
    <property type="project" value="FlyBase"/>
</dbReference>
<dbReference type="GO" id="GO:0006325">
    <property type="term" value="P:chromatin organization"/>
    <property type="evidence" value="ECO:0000315"/>
    <property type="project" value="UniProtKB"/>
</dbReference>
<dbReference type="GO" id="GO:0021782">
    <property type="term" value="P:glial cell development"/>
    <property type="evidence" value="ECO:0000315"/>
    <property type="project" value="FlyBase"/>
</dbReference>
<dbReference type="GO" id="GO:0008347">
    <property type="term" value="P:glial cell migration"/>
    <property type="evidence" value="ECO:0000315"/>
    <property type="project" value="FlyBase"/>
</dbReference>
<dbReference type="GO" id="GO:0045893">
    <property type="term" value="P:positive regulation of DNA-templated transcription"/>
    <property type="evidence" value="ECO:0000315"/>
    <property type="project" value="UniProtKB"/>
</dbReference>
<dbReference type="GO" id="GO:0016579">
    <property type="term" value="P:protein deubiquitination"/>
    <property type="evidence" value="ECO:0007669"/>
    <property type="project" value="InterPro"/>
</dbReference>
<dbReference type="GO" id="GO:0006355">
    <property type="term" value="P:regulation of DNA-templated transcription"/>
    <property type="evidence" value="ECO:0000315"/>
    <property type="project" value="FlyBase"/>
</dbReference>
<dbReference type="GO" id="GO:0006511">
    <property type="term" value="P:ubiquitin-dependent protein catabolic process"/>
    <property type="evidence" value="ECO:0000316"/>
    <property type="project" value="FlyBase"/>
</dbReference>
<dbReference type="CDD" id="cd02660">
    <property type="entry name" value="Peptidase_C19D"/>
    <property type="match status" value="1"/>
</dbReference>
<dbReference type="FunFam" id="3.30.40.10:FF:000714">
    <property type="entry name" value="Ubiquitinyl hydrolase 1"/>
    <property type="match status" value="1"/>
</dbReference>
<dbReference type="FunFam" id="3.90.70.10:FF:000089">
    <property type="entry name" value="Ubiquitinyl hydrolase 1"/>
    <property type="match status" value="1"/>
</dbReference>
<dbReference type="Gene3D" id="3.90.70.10">
    <property type="entry name" value="Cysteine proteinases"/>
    <property type="match status" value="1"/>
</dbReference>
<dbReference type="Gene3D" id="3.30.40.10">
    <property type="entry name" value="Zinc/RING finger domain, C3HC4 (zinc finger)"/>
    <property type="match status" value="1"/>
</dbReference>
<dbReference type="InterPro" id="IPR038765">
    <property type="entry name" value="Papain-like_cys_pep_sf"/>
</dbReference>
<dbReference type="InterPro" id="IPR001394">
    <property type="entry name" value="Peptidase_C19_UCH"/>
</dbReference>
<dbReference type="InterPro" id="IPR050185">
    <property type="entry name" value="Ub_carboxyl-term_hydrolase"/>
</dbReference>
<dbReference type="InterPro" id="IPR018200">
    <property type="entry name" value="USP_CS"/>
</dbReference>
<dbReference type="InterPro" id="IPR028889">
    <property type="entry name" value="USP_dom"/>
</dbReference>
<dbReference type="InterPro" id="IPR013083">
    <property type="entry name" value="Znf_RING/FYVE/PHD"/>
</dbReference>
<dbReference type="InterPro" id="IPR001607">
    <property type="entry name" value="Znf_UBP"/>
</dbReference>
<dbReference type="PANTHER" id="PTHR21646">
    <property type="entry name" value="UBIQUITIN CARBOXYL-TERMINAL HYDROLASE"/>
    <property type="match status" value="1"/>
</dbReference>
<dbReference type="PANTHER" id="PTHR21646:SF33">
    <property type="entry name" value="UBIQUITIN CARBOXYL-TERMINAL HYDROLASE 22"/>
    <property type="match status" value="1"/>
</dbReference>
<dbReference type="Pfam" id="PF00443">
    <property type="entry name" value="UCH"/>
    <property type="match status" value="1"/>
</dbReference>
<dbReference type="Pfam" id="PF02148">
    <property type="entry name" value="zf-UBP"/>
    <property type="match status" value="1"/>
</dbReference>
<dbReference type="SUPFAM" id="SSF54001">
    <property type="entry name" value="Cysteine proteinases"/>
    <property type="match status" value="1"/>
</dbReference>
<dbReference type="SUPFAM" id="SSF57850">
    <property type="entry name" value="RING/U-box"/>
    <property type="match status" value="1"/>
</dbReference>
<dbReference type="PROSITE" id="PS00972">
    <property type="entry name" value="USP_1"/>
    <property type="match status" value="1"/>
</dbReference>
<dbReference type="PROSITE" id="PS00973">
    <property type="entry name" value="USP_2"/>
    <property type="match status" value="1"/>
</dbReference>
<dbReference type="PROSITE" id="PS50235">
    <property type="entry name" value="USP_3"/>
    <property type="match status" value="1"/>
</dbReference>
<dbReference type="PROSITE" id="PS50271">
    <property type="entry name" value="ZF_UBP"/>
    <property type="match status" value="1"/>
</dbReference>
<accession>Q9VVR1</accession>
<accession>Q95TK9</accession>
<accession>Q9U6Q9</accession>
<accession>X2JCK7</accession>
<sequence length="496" mass="56441">MSETGCRHYQSYVKEHSYDTFRVIDAYFAACVNRDARERKAIHCNCFECGSYGIQLYACLHCIYFGCRGAHITSHLRSKKHNVALELSHGTLYCYACRDFIYDARSREYALINRKLEAKDLQKSIGWVPWVPTTKETNLLLANARRRLVRPNQTIGLRGLLNLGATCFMNCIVQALVHTPLLSDYFMSDRHDCGSKSSHKCLVCEVSRLFQEFYSGSRSPLSLHRLLHLIWNHAKHLAGYEQQDAHEFFIATLDVLHRHCVKAKAEHESKSNSSGSGSGTNSSNSSSSHCYGQCNCIIDQIFTGMLQSDVVCQACNGVSTTYDPFWDISLDLGETTTHGGVTPKTLIDCLERYTRAEHLGSAAKIKCSTCKSYQESTKQFSLRTLPSVVSFHLKRFEHSALIDRKISSFIQFPVEFDMTPFMSEKKNAYGDFRFSLYAVVNHVGTIDTGHYTAYVRHQKDTWVKCDDHVITMASLKQVLDSEGYLLFYHKNVLEYE</sequence>
<proteinExistence type="evidence at protein level"/>
<protein>
    <recommendedName>
        <fullName>Ubiquitin carboxyl-terminal hydrolase nonstop</fullName>
        <ecNumber>3.4.19.12</ecNumber>
    </recommendedName>
    <alternativeName>
        <fullName>Deubiquitinating enzyme nonstop</fullName>
    </alternativeName>
    <alternativeName>
        <fullName>Ubiquitin thioesterase nonstop</fullName>
    </alternativeName>
    <alternativeName>
        <fullName>Ubiquitin-specific-processing protease nonstop</fullName>
    </alternativeName>
</protein>